<proteinExistence type="inferred from homology"/>
<reference key="1">
    <citation type="journal article" date="2004" name="Environ. Microbiol.">
        <title>The genome of Desulfotalea psychrophila, a sulfate-reducing bacterium from permanently cold Arctic sediments.</title>
        <authorList>
            <person name="Rabus R."/>
            <person name="Ruepp A."/>
            <person name="Frickey T."/>
            <person name="Rattei T."/>
            <person name="Fartmann B."/>
            <person name="Stark M."/>
            <person name="Bauer M."/>
            <person name="Zibat A."/>
            <person name="Lombardot T."/>
            <person name="Becker I."/>
            <person name="Amann J."/>
            <person name="Gellner K."/>
            <person name="Teeling H."/>
            <person name="Leuschner W.D."/>
            <person name="Gloeckner F.-O."/>
            <person name="Lupas A.N."/>
            <person name="Amann R."/>
            <person name="Klenk H.-P."/>
        </authorList>
    </citation>
    <scope>NUCLEOTIDE SEQUENCE [LARGE SCALE GENOMIC DNA]</scope>
    <source>
        <strain>DSM 12343 / LSv54</strain>
    </source>
</reference>
<gene>
    <name evidence="1" type="primary">greA</name>
    <name type="ordered locus">DP2189</name>
</gene>
<feature type="chain" id="PRO_1000117405" description="Transcription elongation factor GreA">
    <location>
        <begin position="1"/>
        <end position="161"/>
    </location>
</feature>
<organism>
    <name type="scientific">Desulfotalea psychrophila (strain LSv54 / DSM 12343)</name>
    <dbReference type="NCBI Taxonomy" id="177439"/>
    <lineage>
        <taxon>Bacteria</taxon>
        <taxon>Pseudomonadati</taxon>
        <taxon>Thermodesulfobacteriota</taxon>
        <taxon>Desulfobulbia</taxon>
        <taxon>Desulfobulbales</taxon>
        <taxon>Desulfocapsaceae</taxon>
        <taxon>Desulfotalea</taxon>
    </lineage>
</organism>
<accession>Q6AL57</accession>
<dbReference type="EMBL" id="CR522870">
    <property type="protein sequence ID" value="CAG36918.1"/>
    <property type="molecule type" value="Genomic_DNA"/>
</dbReference>
<dbReference type="RefSeq" id="WP_011189430.1">
    <property type="nucleotide sequence ID" value="NC_006138.1"/>
</dbReference>
<dbReference type="SMR" id="Q6AL57"/>
<dbReference type="STRING" id="177439.DP2189"/>
<dbReference type="KEGG" id="dps:DP2189"/>
<dbReference type="eggNOG" id="COG0782">
    <property type="taxonomic scope" value="Bacteria"/>
</dbReference>
<dbReference type="HOGENOM" id="CLU_101379_2_0_7"/>
<dbReference type="OrthoDB" id="9808774at2"/>
<dbReference type="Proteomes" id="UP000000602">
    <property type="component" value="Chromosome"/>
</dbReference>
<dbReference type="GO" id="GO:0003677">
    <property type="term" value="F:DNA binding"/>
    <property type="evidence" value="ECO:0007669"/>
    <property type="project" value="UniProtKB-UniRule"/>
</dbReference>
<dbReference type="GO" id="GO:0070063">
    <property type="term" value="F:RNA polymerase binding"/>
    <property type="evidence" value="ECO:0007669"/>
    <property type="project" value="InterPro"/>
</dbReference>
<dbReference type="GO" id="GO:0006354">
    <property type="term" value="P:DNA-templated transcription elongation"/>
    <property type="evidence" value="ECO:0007669"/>
    <property type="project" value="TreeGrafter"/>
</dbReference>
<dbReference type="GO" id="GO:0032784">
    <property type="term" value="P:regulation of DNA-templated transcription elongation"/>
    <property type="evidence" value="ECO:0007669"/>
    <property type="project" value="UniProtKB-UniRule"/>
</dbReference>
<dbReference type="FunFam" id="1.10.287.180:FF:000001">
    <property type="entry name" value="Transcription elongation factor GreA"/>
    <property type="match status" value="1"/>
</dbReference>
<dbReference type="FunFam" id="3.10.50.30:FF:000001">
    <property type="entry name" value="Transcription elongation factor GreA"/>
    <property type="match status" value="1"/>
</dbReference>
<dbReference type="Gene3D" id="3.10.50.30">
    <property type="entry name" value="Transcription elongation factor, GreA/GreB, C-terminal domain"/>
    <property type="match status" value="1"/>
</dbReference>
<dbReference type="Gene3D" id="1.10.287.180">
    <property type="entry name" value="Transcription elongation factor, GreA/GreB, N-terminal domain"/>
    <property type="match status" value="1"/>
</dbReference>
<dbReference type="HAMAP" id="MF_00105">
    <property type="entry name" value="GreA_GreB"/>
    <property type="match status" value="1"/>
</dbReference>
<dbReference type="InterPro" id="IPR036953">
    <property type="entry name" value="GreA/GreB_C_sf"/>
</dbReference>
<dbReference type="InterPro" id="IPR018151">
    <property type="entry name" value="TF_GreA/GreB_CS"/>
</dbReference>
<dbReference type="InterPro" id="IPR006359">
    <property type="entry name" value="Tscrpt_elong_fac_GreA"/>
</dbReference>
<dbReference type="InterPro" id="IPR028624">
    <property type="entry name" value="Tscrpt_elong_fac_GreA/B"/>
</dbReference>
<dbReference type="InterPro" id="IPR001437">
    <property type="entry name" value="Tscrpt_elong_fac_GreA/B_C"/>
</dbReference>
<dbReference type="InterPro" id="IPR023459">
    <property type="entry name" value="Tscrpt_elong_fac_GreA/B_fam"/>
</dbReference>
<dbReference type="InterPro" id="IPR022691">
    <property type="entry name" value="Tscrpt_elong_fac_GreA/B_N"/>
</dbReference>
<dbReference type="InterPro" id="IPR036805">
    <property type="entry name" value="Tscrpt_elong_fac_GreA/B_N_sf"/>
</dbReference>
<dbReference type="NCBIfam" id="TIGR01462">
    <property type="entry name" value="greA"/>
    <property type="match status" value="1"/>
</dbReference>
<dbReference type="NCBIfam" id="NF001261">
    <property type="entry name" value="PRK00226.1-2"/>
    <property type="match status" value="1"/>
</dbReference>
<dbReference type="NCBIfam" id="NF001263">
    <property type="entry name" value="PRK00226.1-4"/>
    <property type="match status" value="1"/>
</dbReference>
<dbReference type="NCBIfam" id="NF001264">
    <property type="entry name" value="PRK00226.1-5"/>
    <property type="match status" value="1"/>
</dbReference>
<dbReference type="PANTHER" id="PTHR30437">
    <property type="entry name" value="TRANSCRIPTION ELONGATION FACTOR GREA"/>
    <property type="match status" value="1"/>
</dbReference>
<dbReference type="PANTHER" id="PTHR30437:SF4">
    <property type="entry name" value="TRANSCRIPTION ELONGATION FACTOR GREA"/>
    <property type="match status" value="1"/>
</dbReference>
<dbReference type="Pfam" id="PF01272">
    <property type="entry name" value="GreA_GreB"/>
    <property type="match status" value="1"/>
</dbReference>
<dbReference type="Pfam" id="PF03449">
    <property type="entry name" value="GreA_GreB_N"/>
    <property type="match status" value="1"/>
</dbReference>
<dbReference type="PIRSF" id="PIRSF006092">
    <property type="entry name" value="GreA_GreB"/>
    <property type="match status" value="1"/>
</dbReference>
<dbReference type="SUPFAM" id="SSF54534">
    <property type="entry name" value="FKBP-like"/>
    <property type="match status" value="1"/>
</dbReference>
<dbReference type="SUPFAM" id="SSF46557">
    <property type="entry name" value="GreA transcript cleavage protein, N-terminal domain"/>
    <property type="match status" value="1"/>
</dbReference>
<dbReference type="PROSITE" id="PS00829">
    <property type="entry name" value="GREAB_1"/>
    <property type="match status" value="1"/>
</dbReference>
<dbReference type="PROSITE" id="PS00830">
    <property type="entry name" value="GREAB_2"/>
    <property type="match status" value="1"/>
</dbReference>
<keyword id="KW-0238">DNA-binding</keyword>
<keyword id="KW-1185">Reference proteome</keyword>
<keyword id="KW-0804">Transcription</keyword>
<keyword id="KW-0805">Transcription regulation</keyword>
<name>GREA_DESPS</name>
<protein>
    <recommendedName>
        <fullName evidence="1">Transcription elongation factor GreA</fullName>
    </recommendedName>
    <alternativeName>
        <fullName evidence="1">Transcript cleavage factor GreA</fullName>
    </alternativeName>
</protein>
<evidence type="ECO:0000255" key="1">
    <source>
        <dbReference type="HAMAP-Rule" id="MF_00105"/>
    </source>
</evidence>
<comment type="function">
    <text evidence="1">Necessary for efficient RNA polymerase transcription elongation past template-encoded arresting sites. The arresting sites in DNA have the property of trapping a certain fraction of elongating RNA polymerases that pass through, resulting in locked ternary complexes. Cleavage of the nascent transcript by cleavage factors such as GreA or GreB allows the resumption of elongation from the new 3'terminus. GreA releases sequences of 2 to 3 nucleotides.</text>
</comment>
<comment type="similarity">
    <text evidence="1">Belongs to the GreA/GreB family.</text>
</comment>
<sequence length="161" mass="17984">MIDRIPMSVRGNKKLKEELLRLTRVERLDVVKAIEVAREHGDLKENAEYHAAKERQGMIEARIMDLKDKLGRAEVIDCLQVSCKRVVFGTVVVLLDLDTDEEVTYQLLGPEESEVKAGSISVLSPIGRSMLSKEEGDEVVTKTPGGTREFEVVEIKTGDFA</sequence>